<organism>
    <name type="scientific">Salmonella arizonae (strain ATCC BAA-731 / CDC346-86 / RSK2980)</name>
    <dbReference type="NCBI Taxonomy" id="41514"/>
    <lineage>
        <taxon>Bacteria</taxon>
        <taxon>Pseudomonadati</taxon>
        <taxon>Pseudomonadota</taxon>
        <taxon>Gammaproteobacteria</taxon>
        <taxon>Enterobacterales</taxon>
        <taxon>Enterobacteriaceae</taxon>
        <taxon>Salmonella</taxon>
    </lineage>
</organism>
<sequence length="258" mass="28386">MLAKRIIPCLDVRDGQVVKGVQFRNHEIIGDIVPLAKRYADEGADELVFYDITASSDGRVVDKSWVSRVAEVIDIPFCVAGGIRSIDDAAKILSFGADKISVNSPALSDPTLITRLADRFGVQCIVVGIDTWFDDATGKYHVNQYTGDENRTRVTQWETLDWVQEVQQRGAGEIVLNMMNQDGVRNGYDLTQLKKVRDVCRVPLIASGGAGTMEHFLEAFRDADVDGALAASVFHKQIINIGELKAYLAGQGVEIRIC</sequence>
<proteinExistence type="inferred from homology"/>
<evidence type="ECO:0000255" key="1">
    <source>
        <dbReference type="HAMAP-Rule" id="MF_01013"/>
    </source>
</evidence>
<protein>
    <recommendedName>
        <fullName evidence="1">Imidazole glycerol phosphate synthase subunit HisF</fullName>
        <ecNumber evidence="1">4.3.2.10</ecNumber>
    </recommendedName>
    <alternativeName>
        <fullName evidence="1">IGP synthase cyclase subunit</fullName>
    </alternativeName>
    <alternativeName>
        <fullName evidence="1">IGP synthase subunit HisF</fullName>
    </alternativeName>
    <alternativeName>
        <fullName evidence="1">ImGP synthase subunit HisF</fullName>
        <shortName evidence="1">IGPS subunit HisF</shortName>
    </alternativeName>
</protein>
<comment type="function">
    <text evidence="1">IGPS catalyzes the conversion of PRFAR and glutamine to IGP, AICAR and glutamate. The HisF subunit catalyzes the cyclization activity that produces IGP and AICAR from PRFAR using the ammonia provided by the HisH subunit.</text>
</comment>
<comment type="catalytic activity">
    <reaction evidence="1">
        <text>5-[(5-phospho-1-deoxy-D-ribulos-1-ylimino)methylamino]-1-(5-phospho-beta-D-ribosyl)imidazole-4-carboxamide + L-glutamine = D-erythro-1-(imidazol-4-yl)glycerol 3-phosphate + 5-amino-1-(5-phospho-beta-D-ribosyl)imidazole-4-carboxamide + L-glutamate + H(+)</text>
        <dbReference type="Rhea" id="RHEA:24793"/>
        <dbReference type="ChEBI" id="CHEBI:15378"/>
        <dbReference type="ChEBI" id="CHEBI:29985"/>
        <dbReference type="ChEBI" id="CHEBI:58278"/>
        <dbReference type="ChEBI" id="CHEBI:58359"/>
        <dbReference type="ChEBI" id="CHEBI:58475"/>
        <dbReference type="ChEBI" id="CHEBI:58525"/>
        <dbReference type="EC" id="4.3.2.10"/>
    </reaction>
</comment>
<comment type="pathway">
    <text evidence="1">Amino-acid biosynthesis; L-histidine biosynthesis; L-histidine from 5-phospho-alpha-D-ribose 1-diphosphate: step 5/9.</text>
</comment>
<comment type="subunit">
    <text evidence="1">Heterodimer of HisH and HisF.</text>
</comment>
<comment type="subcellular location">
    <subcellularLocation>
        <location evidence="1">Cytoplasm</location>
    </subcellularLocation>
</comment>
<comment type="similarity">
    <text evidence="1">Belongs to the HisA/HisF family.</text>
</comment>
<name>HIS6_SALAR</name>
<feature type="chain" id="PRO_1000084075" description="Imidazole glycerol phosphate synthase subunit HisF">
    <location>
        <begin position="1"/>
        <end position="258"/>
    </location>
</feature>
<feature type="active site" evidence="1">
    <location>
        <position position="11"/>
    </location>
</feature>
<feature type="active site" evidence="1">
    <location>
        <position position="130"/>
    </location>
</feature>
<keyword id="KW-0028">Amino-acid biosynthesis</keyword>
<keyword id="KW-0963">Cytoplasm</keyword>
<keyword id="KW-0368">Histidine biosynthesis</keyword>
<keyword id="KW-0456">Lyase</keyword>
<keyword id="KW-1185">Reference proteome</keyword>
<accession>A9ML11</accession>
<gene>
    <name evidence="1" type="primary">hisF</name>
    <name type="ordered locus">SARI_00807</name>
</gene>
<dbReference type="EC" id="4.3.2.10" evidence="1"/>
<dbReference type="EMBL" id="CP000880">
    <property type="protein sequence ID" value="ABX20727.1"/>
    <property type="molecule type" value="Genomic_DNA"/>
</dbReference>
<dbReference type="SMR" id="A9ML11"/>
<dbReference type="STRING" id="41514.SARI_00807"/>
<dbReference type="KEGG" id="ses:SARI_00807"/>
<dbReference type="HOGENOM" id="CLU_048577_4_0_6"/>
<dbReference type="UniPathway" id="UPA00031">
    <property type="reaction ID" value="UER00010"/>
</dbReference>
<dbReference type="Proteomes" id="UP000002084">
    <property type="component" value="Chromosome"/>
</dbReference>
<dbReference type="GO" id="GO:0005737">
    <property type="term" value="C:cytoplasm"/>
    <property type="evidence" value="ECO:0007669"/>
    <property type="project" value="UniProtKB-SubCell"/>
</dbReference>
<dbReference type="GO" id="GO:0000107">
    <property type="term" value="F:imidazoleglycerol-phosphate synthase activity"/>
    <property type="evidence" value="ECO:0007669"/>
    <property type="project" value="UniProtKB-UniRule"/>
</dbReference>
<dbReference type="GO" id="GO:0016829">
    <property type="term" value="F:lyase activity"/>
    <property type="evidence" value="ECO:0007669"/>
    <property type="project" value="UniProtKB-KW"/>
</dbReference>
<dbReference type="GO" id="GO:0000105">
    <property type="term" value="P:L-histidine biosynthetic process"/>
    <property type="evidence" value="ECO:0007669"/>
    <property type="project" value="UniProtKB-UniRule"/>
</dbReference>
<dbReference type="CDD" id="cd04731">
    <property type="entry name" value="HisF"/>
    <property type="match status" value="1"/>
</dbReference>
<dbReference type="FunFam" id="3.20.20.70:FF:000006">
    <property type="entry name" value="Imidazole glycerol phosphate synthase subunit HisF"/>
    <property type="match status" value="1"/>
</dbReference>
<dbReference type="Gene3D" id="3.20.20.70">
    <property type="entry name" value="Aldolase class I"/>
    <property type="match status" value="1"/>
</dbReference>
<dbReference type="HAMAP" id="MF_01013">
    <property type="entry name" value="HisF"/>
    <property type="match status" value="1"/>
</dbReference>
<dbReference type="InterPro" id="IPR013785">
    <property type="entry name" value="Aldolase_TIM"/>
</dbReference>
<dbReference type="InterPro" id="IPR006062">
    <property type="entry name" value="His_biosynth"/>
</dbReference>
<dbReference type="InterPro" id="IPR004651">
    <property type="entry name" value="HisF"/>
</dbReference>
<dbReference type="InterPro" id="IPR050064">
    <property type="entry name" value="IGPS_HisA/HisF"/>
</dbReference>
<dbReference type="InterPro" id="IPR011060">
    <property type="entry name" value="RibuloseP-bd_barrel"/>
</dbReference>
<dbReference type="NCBIfam" id="TIGR00735">
    <property type="entry name" value="hisF"/>
    <property type="match status" value="1"/>
</dbReference>
<dbReference type="PANTHER" id="PTHR21235:SF2">
    <property type="entry name" value="IMIDAZOLE GLYCEROL PHOSPHATE SYNTHASE HISHF"/>
    <property type="match status" value="1"/>
</dbReference>
<dbReference type="PANTHER" id="PTHR21235">
    <property type="entry name" value="IMIDAZOLE GLYCEROL PHOSPHATE SYNTHASE SUBUNIT HISF/H IGP SYNTHASE SUBUNIT HISF/H"/>
    <property type="match status" value="1"/>
</dbReference>
<dbReference type="Pfam" id="PF00977">
    <property type="entry name" value="His_biosynth"/>
    <property type="match status" value="1"/>
</dbReference>
<dbReference type="SUPFAM" id="SSF51366">
    <property type="entry name" value="Ribulose-phoshate binding barrel"/>
    <property type="match status" value="1"/>
</dbReference>
<reference key="1">
    <citation type="submission" date="2007-11" db="EMBL/GenBank/DDBJ databases">
        <authorList>
            <consortium name="The Salmonella enterica serovar Arizonae Genome Sequencing Project"/>
            <person name="McClelland M."/>
            <person name="Sanderson E.K."/>
            <person name="Porwollik S."/>
            <person name="Spieth J."/>
            <person name="Clifton W.S."/>
            <person name="Fulton R."/>
            <person name="Chunyan W."/>
            <person name="Wollam A."/>
            <person name="Shah N."/>
            <person name="Pepin K."/>
            <person name="Bhonagiri V."/>
            <person name="Nash W."/>
            <person name="Johnson M."/>
            <person name="Thiruvilangam P."/>
            <person name="Wilson R."/>
        </authorList>
    </citation>
    <scope>NUCLEOTIDE SEQUENCE [LARGE SCALE GENOMIC DNA]</scope>
    <source>
        <strain>ATCC BAA-731 / CDC346-86 / RSK2980</strain>
    </source>
</reference>